<organism>
    <name type="scientific">Danio rerio</name>
    <name type="common">Zebrafish</name>
    <name type="synonym">Brachydanio rerio</name>
    <dbReference type="NCBI Taxonomy" id="7955"/>
    <lineage>
        <taxon>Eukaryota</taxon>
        <taxon>Metazoa</taxon>
        <taxon>Chordata</taxon>
        <taxon>Craniata</taxon>
        <taxon>Vertebrata</taxon>
        <taxon>Euteleostomi</taxon>
        <taxon>Actinopterygii</taxon>
        <taxon>Neopterygii</taxon>
        <taxon>Teleostei</taxon>
        <taxon>Ostariophysi</taxon>
        <taxon>Cypriniformes</taxon>
        <taxon>Danionidae</taxon>
        <taxon>Danioninae</taxon>
        <taxon>Danio</taxon>
    </lineage>
</organism>
<protein>
    <recommendedName>
        <fullName>PI-PLC X domain-containing protein 3</fullName>
    </recommendedName>
</protein>
<reference key="1">
    <citation type="submission" date="2005-03" db="EMBL/GenBank/DDBJ databases">
        <authorList>
            <consortium name="NIH - Zebrafish Gene Collection (ZGC) project"/>
        </authorList>
    </citation>
    <scope>NUCLEOTIDE SEQUENCE [LARGE SCALE MRNA]</scope>
    <source>
        <tissue>Embryo</tissue>
    </source>
</reference>
<keyword id="KW-0378">Hydrolase</keyword>
<keyword id="KW-0442">Lipid degradation</keyword>
<keyword id="KW-0443">Lipid metabolism</keyword>
<keyword id="KW-1185">Reference proteome</keyword>
<keyword id="KW-0807">Transducer</keyword>
<sequence>MASSQGKSELRYADWMSSLPDTLHGIPLTNLAIPGSHDSFSFYIDEASPVGPEQPETVQNFVSVFGTVAKKLMRKWLATQTMNFTSQLEAGIRFFDLRISTKPRDPDNELYFAHGLFSATVREGLEQISTFLASHAREVVFLDFNHFYGVQNLHHEKLVQMLRTVFGDRLCPVVFAQEVSLKYLWEKEYQVLVFYHNPMALEVPFLWPGQMMPAPWANTTDPEKLILFLQASVKDRRRKGTFFVSQVVLTPKASTVMKGVTSGLRETITERALPSMMQWIRSQRPGESGVNIITADFVELGEFISAVITLNYYLDDEEENAT</sequence>
<proteinExistence type="evidence at transcript level"/>
<gene>
    <name type="primary">plcxd3</name>
    <name type="ORF">zgc:110845</name>
</gene>
<accession>Q58EK3</accession>
<feature type="chain" id="PRO_0000305695" description="PI-PLC X domain-containing protein 3">
    <location>
        <begin position="1"/>
        <end position="322"/>
    </location>
</feature>
<feature type="domain" description="PI-PLC X-box" evidence="1">
    <location>
        <begin position="22"/>
        <end position="197"/>
    </location>
</feature>
<feature type="active site" evidence="1">
    <location>
        <position position="37"/>
    </location>
</feature>
<feature type="active site" evidence="1">
    <location>
        <position position="114"/>
    </location>
</feature>
<name>PLCX3_DANRE</name>
<dbReference type="EMBL" id="BC091866">
    <property type="protein sequence ID" value="AAH91866.1"/>
    <property type="molecule type" value="mRNA"/>
</dbReference>
<dbReference type="RefSeq" id="NP_001014322.1">
    <property type="nucleotide sequence ID" value="NM_001014300.1"/>
</dbReference>
<dbReference type="SMR" id="Q58EK3"/>
<dbReference type="FunCoup" id="Q58EK3">
    <property type="interactions" value="467"/>
</dbReference>
<dbReference type="STRING" id="7955.ENSDARP00000071521"/>
<dbReference type="PaxDb" id="7955-ENSDARP00000071521"/>
<dbReference type="Ensembl" id="ENSDART00000077053">
    <property type="protein sequence ID" value="ENSDARP00000071521"/>
    <property type="gene ID" value="ENSDARG00000054794"/>
</dbReference>
<dbReference type="GeneID" id="541487"/>
<dbReference type="KEGG" id="dre:541487"/>
<dbReference type="AGR" id="ZFIN:ZDB-GENE-050327-10"/>
<dbReference type="CTD" id="345557"/>
<dbReference type="ZFIN" id="ZDB-GENE-050327-10">
    <property type="gene designation" value="plcxd3"/>
</dbReference>
<dbReference type="eggNOG" id="KOG4306">
    <property type="taxonomic scope" value="Eukaryota"/>
</dbReference>
<dbReference type="HOGENOM" id="CLU_051926_0_0_1"/>
<dbReference type="InParanoid" id="Q58EK3"/>
<dbReference type="OMA" id="ALPAMMH"/>
<dbReference type="OrthoDB" id="1046782at2759"/>
<dbReference type="PhylomeDB" id="Q58EK3"/>
<dbReference type="TreeFam" id="TF314457"/>
<dbReference type="PRO" id="PR:Q58EK3"/>
<dbReference type="Proteomes" id="UP000000437">
    <property type="component" value="Chromosome 8"/>
</dbReference>
<dbReference type="Bgee" id="ENSDARG00000054794">
    <property type="expression patterns" value="Expressed in brain and 19 other cell types or tissues"/>
</dbReference>
<dbReference type="ExpressionAtlas" id="Q58EK3">
    <property type="expression patterns" value="baseline and differential"/>
</dbReference>
<dbReference type="GO" id="GO:0045202">
    <property type="term" value="C:synapse"/>
    <property type="evidence" value="ECO:0000318"/>
    <property type="project" value="GO_Central"/>
</dbReference>
<dbReference type="GO" id="GO:0008081">
    <property type="term" value="F:phosphoric diester hydrolase activity"/>
    <property type="evidence" value="ECO:0000318"/>
    <property type="project" value="GO_Central"/>
</dbReference>
<dbReference type="GO" id="GO:0016042">
    <property type="term" value="P:lipid catabolic process"/>
    <property type="evidence" value="ECO:0007669"/>
    <property type="project" value="UniProtKB-KW"/>
</dbReference>
<dbReference type="GO" id="GO:0007165">
    <property type="term" value="P:signal transduction"/>
    <property type="evidence" value="ECO:0007669"/>
    <property type="project" value="UniProtKB-KW"/>
</dbReference>
<dbReference type="CDD" id="cd08616">
    <property type="entry name" value="PI-PLCXD1c"/>
    <property type="match status" value="1"/>
</dbReference>
<dbReference type="FunFam" id="3.20.20.190:FF:000021">
    <property type="entry name" value="PI-PLC X domain-containing protein 3"/>
    <property type="match status" value="1"/>
</dbReference>
<dbReference type="Gene3D" id="3.20.20.190">
    <property type="entry name" value="Phosphatidylinositol (PI) phosphodiesterase"/>
    <property type="match status" value="1"/>
</dbReference>
<dbReference type="InterPro" id="IPR051057">
    <property type="entry name" value="PI-PLC_domain"/>
</dbReference>
<dbReference type="InterPro" id="IPR017946">
    <property type="entry name" value="PLC-like_Pdiesterase_TIM-brl"/>
</dbReference>
<dbReference type="InterPro" id="IPR042158">
    <property type="entry name" value="PLCXD1/2/3"/>
</dbReference>
<dbReference type="InterPro" id="IPR000909">
    <property type="entry name" value="PLipase_C_PInositol-sp_X_dom"/>
</dbReference>
<dbReference type="PANTHER" id="PTHR13593">
    <property type="match status" value="1"/>
</dbReference>
<dbReference type="PANTHER" id="PTHR13593:SF33">
    <property type="entry name" value="PI-PLC X DOMAIN-CONTAINING PROTEIN 3"/>
    <property type="match status" value="1"/>
</dbReference>
<dbReference type="Pfam" id="PF00388">
    <property type="entry name" value="PI-PLC-X"/>
    <property type="match status" value="1"/>
</dbReference>
<dbReference type="SMART" id="SM00148">
    <property type="entry name" value="PLCXc"/>
    <property type="match status" value="1"/>
</dbReference>
<dbReference type="SUPFAM" id="SSF51695">
    <property type="entry name" value="PLC-like phosphodiesterases"/>
    <property type="match status" value="1"/>
</dbReference>
<dbReference type="PROSITE" id="PS50007">
    <property type="entry name" value="PIPLC_X_DOMAIN"/>
    <property type="match status" value="1"/>
</dbReference>
<evidence type="ECO:0000255" key="1">
    <source>
        <dbReference type="PROSITE-ProRule" id="PRU00270"/>
    </source>
</evidence>